<gene>
    <name evidence="11" type="ordered locus">At3g45310</name>
    <name evidence="12" type="ORF">F18N11.70</name>
</gene>
<proteinExistence type="evidence at transcript level"/>
<organism>
    <name type="scientific">Arabidopsis thaliana</name>
    <name type="common">Mouse-ear cress</name>
    <dbReference type="NCBI Taxonomy" id="3702"/>
    <lineage>
        <taxon>Eukaryota</taxon>
        <taxon>Viridiplantae</taxon>
        <taxon>Streptophyta</taxon>
        <taxon>Embryophyta</taxon>
        <taxon>Tracheophyta</taxon>
        <taxon>Spermatophyta</taxon>
        <taxon>Magnoliopsida</taxon>
        <taxon>eudicotyledons</taxon>
        <taxon>Gunneridae</taxon>
        <taxon>Pentapetalae</taxon>
        <taxon>rosids</taxon>
        <taxon>malvids</taxon>
        <taxon>Brassicales</taxon>
        <taxon>Brassicaceae</taxon>
        <taxon>Camelineae</taxon>
        <taxon>Arabidopsis</taxon>
    </lineage>
</organism>
<reference key="1">
    <citation type="journal article" date="2000" name="Nature">
        <title>Sequence and analysis of chromosome 3 of the plant Arabidopsis thaliana.</title>
        <authorList>
            <person name="Salanoubat M."/>
            <person name="Lemcke K."/>
            <person name="Rieger M."/>
            <person name="Ansorge W."/>
            <person name="Unseld M."/>
            <person name="Fartmann B."/>
            <person name="Valle G."/>
            <person name="Bloecker H."/>
            <person name="Perez-Alonso M."/>
            <person name="Obermaier B."/>
            <person name="Delseny M."/>
            <person name="Boutry M."/>
            <person name="Grivell L.A."/>
            <person name="Mache R."/>
            <person name="Puigdomenech P."/>
            <person name="De Simone V."/>
            <person name="Choisne N."/>
            <person name="Artiguenave F."/>
            <person name="Robert C."/>
            <person name="Brottier P."/>
            <person name="Wincker P."/>
            <person name="Cattolico L."/>
            <person name="Weissenbach J."/>
            <person name="Saurin W."/>
            <person name="Quetier F."/>
            <person name="Schaefer M."/>
            <person name="Mueller-Auer S."/>
            <person name="Gabel C."/>
            <person name="Fuchs M."/>
            <person name="Benes V."/>
            <person name="Wurmbach E."/>
            <person name="Drzonek H."/>
            <person name="Erfle H."/>
            <person name="Jordan N."/>
            <person name="Bangert S."/>
            <person name="Wiedelmann R."/>
            <person name="Kranz H."/>
            <person name="Voss H."/>
            <person name="Holland R."/>
            <person name="Brandt P."/>
            <person name="Nyakatura G."/>
            <person name="Vezzi A."/>
            <person name="D'Angelo M."/>
            <person name="Pallavicini A."/>
            <person name="Toppo S."/>
            <person name="Simionati B."/>
            <person name="Conrad A."/>
            <person name="Hornischer K."/>
            <person name="Kauer G."/>
            <person name="Loehnert T.-H."/>
            <person name="Nordsiek G."/>
            <person name="Reichelt J."/>
            <person name="Scharfe M."/>
            <person name="Schoen O."/>
            <person name="Bargues M."/>
            <person name="Terol J."/>
            <person name="Climent J."/>
            <person name="Navarro P."/>
            <person name="Collado C."/>
            <person name="Perez-Perez A."/>
            <person name="Ottenwaelder B."/>
            <person name="Duchemin D."/>
            <person name="Cooke R."/>
            <person name="Laudie M."/>
            <person name="Berger-Llauro C."/>
            <person name="Purnelle B."/>
            <person name="Masuy D."/>
            <person name="de Haan M."/>
            <person name="Maarse A.C."/>
            <person name="Alcaraz J.-P."/>
            <person name="Cottet A."/>
            <person name="Casacuberta E."/>
            <person name="Monfort A."/>
            <person name="Argiriou A."/>
            <person name="Flores M."/>
            <person name="Liguori R."/>
            <person name="Vitale D."/>
            <person name="Mannhaupt G."/>
            <person name="Haase D."/>
            <person name="Schoof H."/>
            <person name="Rudd S."/>
            <person name="Zaccaria P."/>
            <person name="Mewes H.-W."/>
            <person name="Mayer K.F.X."/>
            <person name="Kaul S."/>
            <person name="Town C.D."/>
            <person name="Koo H.L."/>
            <person name="Tallon L.J."/>
            <person name="Jenkins J."/>
            <person name="Rooney T."/>
            <person name="Rizzo M."/>
            <person name="Walts A."/>
            <person name="Utterback T."/>
            <person name="Fujii C.Y."/>
            <person name="Shea T.P."/>
            <person name="Creasy T.H."/>
            <person name="Haas B."/>
            <person name="Maiti R."/>
            <person name="Wu D."/>
            <person name="Peterson J."/>
            <person name="Van Aken S."/>
            <person name="Pai G."/>
            <person name="Militscher J."/>
            <person name="Sellers P."/>
            <person name="Gill J.E."/>
            <person name="Feldblyum T.V."/>
            <person name="Preuss D."/>
            <person name="Lin X."/>
            <person name="Nierman W.C."/>
            <person name="Salzberg S.L."/>
            <person name="White O."/>
            <person name="Venter J.C."/>
            <person name="Fraser C.M."/>
            <person name="Kaneko T."/>
            <person name="Nakamura Y."/>
            <person name="Sato S."/>
            <person name="Kato T."/>
            <person name="Asamizu E."/>
            <person name="Sasamoto S."/>
            <person name="Kimura T."/>
            <person name="Idesawa K."/>
            <person name="Kawashima K."/>
            <person name="Kishida Y."/>
            <person name="Kiyokawa C."/>
            <person name="Kohara M."/>
            <person name="Matsumoto M."/>
            <person name="Matsuno A."/>
            <person name="Muraki A."/>
            <person name="Nakayama S."/>
            <person name="Nakazaki N."/>
            <person name="Shinpo S."/>
            <person name="Takeuchi C."/>
            <person name="Wada T."/>
            <person name="Watanabe A."/>
            <person name="Yamada M."/>
            <person name="Yasuda M."/>
            <person name="Tabata S."/>
        </authorList>
    </citation>
    <scope>NUCLEOTIDE SEQUENCE [LARGE SCALE GENOMIC DNA]</scope>
    <source>
        <strain>cv. Columbia</strain>
    </source>
</reference>
<reference key="2">
    <citation type="journal article" date="2017" name="Plant J.">
        <title>Araport11: a complete reannotation of the Arabidopsis thaliana reference genome.</title>
        <authorList>
            <person name="Cheng C.Y."/>
            <person name="Krishnakumar V."/>
            <person name="Chan A.P."/>
            <person name="Thibaud-Nissen F."/>
            <person name="Schobel S."/>
            <person name="Town C.D."/>
        </authorList>
    </citation>
    <scope>GENOME REANNOTATION</scope>
    <source>
        <strain>cv. Columbia</strain>
    </source>
</reference>
<reference key="3">
    <citation type="journal article" date="2003" name="Science">
        <title>Empirical analysis of transcriptional activity in the Arabidopsis genome.</title>
        <authorList>
            <person name="Yamada K."/>
            <person name="Lim J."/>
            <person name="Dale J.M."/>
            <person name="Chen H."/>
            <person name="Shinn P."/>
            <person name="Palm C.J."/>
            <person name="Southwick A.M."/>
            <person name="Wu H.C."/>
            <person name="Kim C.J."/>
            <person name="Nguyen M."/>
            <person name="Pham P.K."/>
            <person name="Cheuk R.F."/>
            <person name="Karlin-Newmann G."/>
            <person name="Liu S.X."/>
            <person name="Lam B."/>
            <person name="Sakano H."/>
            <person name="Wu T."/>
            <person name="Yu G."/>
            <person name="Miranda M."/>
            <person name="Quach H.L."/>
            <person name="Tripp M."/>
            <person name="Chang C.H."/>
            <person name="Lee J.M."/>
            <person name="Toriumi M.J."/>
            <person name="Chan M.M."/>
            <person name="Tang C.C."/>
            <person name="Onodera C.S."/>
            <person name="Deng J.M."/>
            <person name="Akiyama K."/>
            <person name="Ansari Y."/>
            <person name="Arakawa T."/>
            <person name="Banh J."/>
            <person name="Banno F."/>
            <person name="Bowser L."/>
            <person name="Brooks S.Y."/>
            <person name="Carninci P."/>
            <person name="Chao Q."/>
            <person name="Choy N."/>
            <person name="Enju A."/>
            <person name="Goldsmith A.D."/>
            <person name="Gurjal M."/>
            <person name="Hansen N.F."/>
            <person name="Hayashizaki Y."/>
            <person name="Johnson-Hopson C."/>
            <person name="Hsuan V.W."/>
            <person name="Iida K."/>
            <person name="Karnes M."/>
            <person name="Khan S."/>
            <person name="Koesema E."/>
            <person name="Ishida J."/>
            <person name="Jiang P.X."/>
            <person name="Jones T."/>
            <person name="Kawai J."/>
            <person name="Kamiya A."/>
            <person name="Meyers C."/>
            <person name="Nakajima M."/>
            <person name="Narusaka M."/>
            <person name="Seki M."/>
            <person name="Sakurai T."/>
            <person name="Satou M."/>
            <person name="Tamse R."/>
            <person name="Vaysberg M."/>
            <person name="Wallender E.K."/>
            <person name="Wong C."/>
            <person name="Yamamura Y."/>
            <person name="Yuan S."/>
            <person name="Shinozaki K."/>
            <person name="Davis R.W."/>
            <person name="Theologis A."/>
            <person name="Ecker J.R."/>
        </authorList>
    </citation>
    <scope>NUCLEOTIDE SEQUENCE [LARGE SCALE MRNA]</scope>
    <source>
        <strain>cv. Columbia</strain>
    </source>
</reference>
<dbReference type="EC" id="3.4.22.16" evidence="10"/>
<dbReference type="EMBL" id="AL132953">
    <property type="protein sequence ID" value="CAB72480.1"/>
    <property type="status" value="ALT_SEQ"/>
    <property type="molecule type" value="Genomic_DNA"/>
</dbReference>
<dbReference type="EMBL" id="CP002686">
    <property type="protein sequence ID" value="AEE78021.1"/>
    <property type="molecule type" value="Genomic_DNA"/>
</dbReference>
<dbReference type="EMBL" id="AY091771">
    <property type="protein sequence ID" value="AAM10319.1"/>
    <property type="molecule type" value="mRNA"/>
</dbReference>
<dbReference type="PIR" id="T47471">
    <property type="entry name" value="T47471"/>
</dbReference>
<dbReference type="RefSeq" id="NP_566880.1">
    <molecule id="Q8RWQ9-1"/>
    <property type="nucleotide sequence ID" value="NM_114400.4"/>
</dbReference>
<dbReference type="SMR" id="Q8RWQ9"/>
<dbReference type="FunCoup" id="Q8RWQ9">
    <property type="interactions" value="857"/>
</dbReference>
<dbReference type="STRING" id="3702.Q8RWQ9"/>
<dbReference type="MEROPS" id="C01.162"/>
<dbReference type="GlyGen" id="Q8RWQ9">
    <property type="glycosylation" value="2 sites"/>
</dbReference>
<dbReference type="iPTMnet" id="Q8RWQ9"/>
<dbReference type="PaxDb" id="3702-AT3G45310.1"/>
<dbReference type="ProteomicsDB" id="244981">
    <molecule id="Q8RWQ9-1"/>
</dbReference>
<dbReference type="EnsemblPlants" id="AT3G45310.1">
    <molecule id="Q8RWQ9-1"/>
    <property type="protein sequence ID" value="AT3G45310.1"/>
    <property type="gene ID" value="AT3G45310"/>
</dbReference>
<dbReference type="GeneID" id="823669"/>
<dbReference type="Gramene" id="AT3G45310.1">
    <molecule id="Q8RWQ9-1"/>
    <property type="protein sequence ID" value="AT3G45310.1"/>
    <property type="gene ID" value="AT3G45310"/>
</dbReference>
<dbReference type="KEGG" id="ath:AT3G45310"/>
<dbReference type="Araport" id="AT3G45310"/>
<dbReference type="TAIR" id="AT3G45310"/>
<dbReference type="eggNOG" id="KOG1543">
    <property type="taxonomic scope" value="Eukaryota"/>
</dbReference>
<dbReference type="HOGENOM" id="CLU_012184_1_2_1"/>
<dbReference type="InParanoid" id="Q8RWQ9"/>
<dbReference type="OMA" id="CYIANDA"/>
<dbReference type="PhylomeDB" id="Q8RWQ9"/>
<dbReference type="PRO" id="PR:Q8RWQ9"/>
<dbReference type="Proteomes" id="UP000006548">
    <property type="component" value="Chromosome 3"/>
</dbReference>
<dbReference type="ExpressionAtlas" id="Q8RWQ9">
    <property type="expression patterns" value="baseline and differential"/>
</dbReference>
<dbReference type="GO" id="GO:0005829">
    <property type="term" value="C:cytosol"/>
    <property type="evidence" value="ECO:0007005"/>
    <property type="project" value="TAIR"/>
</dbReference>
<dbReference type="GO" id="GO:0005773">
    <property type="term" value="C:vacuole"/>
    <property type="evidence" value="ECO:0007669"/>
    <property type="project" value="UniProtKB-SubCell"/>
</dbReference>
<dbReference type="GO" id="GO:0004197">
    <property type="term" value="F:cysteine-type endopeptidase activity"/>
    <property type="evidence" value="ECO:0007669"/>
    <property type="project" value="UniProtKB-EC"/>
</dbReference>
<dbReference type="GO" id="GO:0006508">
    <property type="term" value="P:proteolysis"/>
    <property type="evidence" value="ECO:0007669"/>
    <property type="project" value="UniProtKB-KW"/>
</dbReference>
<dbReference type="CDD" id="cd02248">
    <property type="entry name" value="Peptidase_C1A"/>
    <property type="match status" value="1"/>
</dbReference>
<dbReference type="FunFam" id="3.90.70.10:FF:000039">
    <property type="entry name" value="Cysteine proteinase 2, putative"/>
    <property type="match status" value="1"/>
</dbReference>
<dbReference type="Gene3D" id="3.90.70.10">
    <property type="entry name" value="Cysteine proteinases"/>
    <property type="match status" value="1"/>
</dbReference>
<dbReference type="InterPro" id="IPR038765">
    <property type="entry name" value="Papain-like_cys_pep_sf"/>
</dbReference>
<dbReference type="InterPro" id="IPR025661">
    <property type="entry name" value="Pept_asp_AS"/>
</dbReference>
<dbReference type="InterPro" id="IPR000169">
    <property type="entry name" value="Pept_cys_AS"/>
</dbReference>
<dbReference type="InterPro" id="IPR025660">
    <property type="entry name" value="Pept_his_AS"/>
</dbReference>
<dbReference type="InterPro" id="IPR013128">
    <property type="entry name" value="Peptidase_C1A"/>
</dbReference>
<dbReference type="InterPro" id="IPR000668">
    <property type="entry name" value="Peptidase_C1A_C"/>
</dbReference>
<dbReference type="InterPro" id="IPR039417">
    <property type="entry name" value="Peptidase_C1A_papain-like"/>
</dbReference>
<dbReference type="InterPro" id="IPR013201">
    <property type="entry name" value="Prot_inhib_I29"/>
</dbReference>
<dbReference type="PANTHER" id="PTHR12411">
    <property type="entry name" value="CYSTEINE PROTEASE FAMILY C1-RELATED"/>
    <property type="match status" value="1"/>
</dbReference>
<dbReference type="Pfam" id="PF08246">
    <property type="entry name" value="Inhibitor_I29"/>
    <property type="match status" value="1"/>
</dbReference>
<dbReference type="Pfam" id="PF00112">
    <property type="entry name" value="Peptidase_C1"/>
    <property type="match status" value="1"/>
</dbReference>
<dbReference type="PRINTS" id="PR00705">
    <property type="entry name" value="PAPAIN"/>
</dbReference>
<dbReference type="SMART" id="SM00848">
    <property type="entry name" value="Inhibitor_I29"/>
    <property type="match status" value="1"/>
</dbReference>
<dbReference type="SMART" id="SM00645">
    <property type="entry name" value="Pept_C1"/>
    <property type="match status" value="1"/>
</dbReference>
<dbReference type="SUPFAM" id="SSF54001">
    <property type="entry name" value="Cysteine proteinases"/>
    <property type="match status" value="1"/>
</dbReference>
<dbReference type="PROSITE" id="PS00640">
    <property type="entry name" value="THIOL_PROTEASE_ASN"/>
    <property type="match status" value="1"/>
</dbReference>
<dbReference type="PROSITE" id="PS00139">
    <property type="entry name" value="THIOL_PROTEASE_CYS"/>
    <property type="match status" value="1"/>
</dbReference>
<dbReference type="PROSITE" id="PS00639">
    <property type="entry name" value="THIOL_PROTEASE_HIS"/>
    <property type="match status" value="1"/>
</dbReference>
<accession>Q8RWQ9</accession>
<accession>Q9M3E7</accession>
<protein>
    <recommendedName>
        <fullName>Thiol protease aleurain-like</fullName>
        <ecNumber evidence="10">3.4.22.16</ecNumber>
    </recommendedName>
</protein>
<evidence type="ECO:0000250" key="1"/>
<evidence type="ECO:0000250" key="2">
    <source>
        <dbReference type="UniProtKB" id="P00785"/>
    </source>
</evidence>
<evidence type="ECO:0000250" key="3">
    <source>
        <dbReference type="UniProtKB" id="P07858"/>
    </source>
</evidence>
<evidence type="ECO:0000250" key="4">
    <source>
        <dbReference type="UniProtKB" id="P25250"/>
    </source>
</evidence>
<evidence type="ECO:0000255" key="5"/>
<evidence type="ECO:0000255" key="6">
    <source>
        <dbReference type="PROSITE-ProRule" id="PRU00498"/>
    </source>
</evidence>
<evidence type="ECO:0000255" key="7">
    <source>
        <dbReference type="PROSITE-ProRule" id="PRU10088"/>
    </source>
</evidence>
<evidence type="ECO:0000255" key="8">
    <source>
        <dbReference type="PROSITE-ProRule" id="PRU10089"/>
    </source>
</evidence>
<evidence type="ECO:0000255" key="9">
    <source>
        <dbReference type="PROSITE-ProRule" id="PRU10090"/>
    </source>
</evidence>
<evidence type="ECO:0000305" key="10"/>
<evidence type="ECO:0000312" key="11">
    <source>
        <dbReference type="Araport" id="AT3G45310"/>
    </source>
</evidence>
<evidence type="ECO:0000312" key="12">
    <source>
        <dbReference type="EMBL" id="CAB72480.1"/>
    </source>
</evidence>
<feature type="signal peptide" evidence="5">
    <location>
        <begin position="1"/>
        <end position="21"/>
    </location>
</feature>
<feature type="propeptide" id="PRO_0000026418" description="Activation peptide" evidence="2">
    <location>
        <begin position="22"/>
        <end position="140"/>
    </location>
</feature>
<feature type="chain" id="PRO_0000026419" description="Thiol protease aleurain-like">
    <location>
        <begin position="141"/>
        <end position="358"/>
    </location>
</feature>
<feature type="active site" evidence="7">
    <location>
        <position position="165"/>
    </location>
</feature>
<feature type="active site" evidence="8">
    <location>
        <position position="305"/>
    </location>
</feature>
<feature type="active site" evidence="9">
    <location>
        <position position="325"/>
    </location>
</feature>
<feature type="glycosylation site" description="N-linked (GlcNAc...) asparagine" evidence="6">
    <location>
        <position position="125"/>
    </location>
</feature>
<feature type="glycosylation site" description="N-linked (GlcNAc...) asparagine" evidence="6">
    <location>
        <position position="254"/>
    </location>
</feature>
<feature type="disulfide bond" evidence="3">
    <location>
        <begin position="162"/>
        <end position="205"/>
    </location>
</feature>
<feature type="disulfide bond" evidence="4">
    <location>
        <begin position="196"/>
        <end position="238"/>
    </location>
</feature>
<feature type="disulfide bond" evidence="4">
    <location>
        <begin position="296"/>
        <end position="346"/>
    </location>
</feature>
<name>ALEUL_ARATH</name>
<comment type="function">
    <text evidence="10">May play a role in proteolysis leading to mobilization of nitrogen during senescence and starvation.</text>
</comment>
<comment type="catalytic activity">
    <reaction evidence="10">
        <text>Hydrolysis of proteins, acting as an aminopeptidase (notably, cleaving Arg-|-Xaa bonds) as well as an endopeptidase.</text>
        <dbReference type="EC" id="3.4.22.16"/>
    </reaction>
</comment>
<comment type="subcellular location">
    <subcellularLocation>
        <location evidence="1">Vacuole</location>
    </subcellularLocation>
</comment>
<comment type="alternative products">
    <event type="alternative splicing"/>
    <isoform>
        <id>Q8RWQ9-1</id>
        <name>1</name>
        <sequence type="displayed"/>
    </isoform>
    <text>A number of isoforms are produced. According to EST sequences.</text>
</comment>
<comment type="similarity">
    <text evidence="7 8 9">Belongs to the peptidase C1 family.</text>
</comment>
<comment type="sequence caution" evidence="10">
    <conflict type="erroneous gene model prediction">
        <sequence resource="EMBL-CDS" id="CAB72480"/>
    </conflict>
</comment>
<keyword id="KW-0025">Alternative splicing</keyword>
<keyword id="KW-1015">Disulfide bond</keyword>
<keyword id="KW-0325">Glycoprotein</keyword>
<keyword id="KW-0378">Hydrolase</keyword>
<keyword id="KW-0645">Protease</keyword>
<keyword id="KW-1185">Reference proteome</keyword>
<keyword id="KW-0732">Signal</keyword>
<keyword id="KW-0788">Thiol protease</keyword>
<keyword id="KW-0926">Vacuole</keyword>
<keyword id="KW-0865">Zymogen</keyword>
<sequence length="358" mass="39542">MSVKLNLSSSILLILFAAAASKEIGFDESNPIKMVSDNLHELEDTVVQILGQSRHVLSFSRFTHRYGKKYQSVEEMKLRFSVFKENLDLIRSTNKKGLSYKLSLNQFADLTWQEFQRYKLGAAQNCSATLKGSHKITEATVPDTKDWREDGIVSPVKEQGHCGSCWTFSTTGALEAAYHQAFGKGISLSEQQLVDCAGTFNNFGCHGGLPSQAFEYIKYNGGLDTEEAYPYTGKDGGCKFSAKNIGVQVRDSVNITLGAEDELKHAVGLVRPVSVAFEVVHEFRFYKKGVFTSNTCGNTPMDVNHAVLAVGYGVEDDVPYWLIKNSWGGEWGDNGYFKMEMGKNMCGVATCSSYPVVA</sequence>